<protein>
    <recommendedName>
        <fullName evidence="1">Elongation factor 1-beta</fullName>
        <shortName evidence="1">EF-1-beta</shortName>
    </recommendedName>
    <alternativeName>
        <fullName evidence="1">aEF-1beta</fullName>
    </alternativeName>
</protein>
<feature type="chain" id="PRO_0000366433" description="Elongation factor 1-beta">
    <location>
        <begin position="1"/>
        <end position="85"/>
    </location>
</feature>
<comment type="function">
    <text evidence="1">Promotes the exchange of GDP for GTP in EF-1-alpha/GDP, thus allowing the regeneration of EF-1-alpha/GTP that could then be used to form the ternary complex EF-1-alpha/GTP/AAtRNA.</text>
</comment>
<comment type="similarity">
    <text evidence="1">Belongs to the EF-1-beta/EF-1-delta family.</text>
</comment>
<dbReference type="EMBL" id="CP000780">
    <property type="protein sequence ID" value="ABS55011.1"/>
    <property type="molecule type" value="Genomic_DNA"/>
</dbReference>
<dbReference type="RefSeq" id="WP_012106030.1">
    <property type="nucleotide sequence ID" value="NC_009712.1"/>
</dbReference>
<dbReference type="SMR" id="A7I5K0"/>
<dbReference type="STRING" id="456442.Mboo_0493"/>
<dbReference type="GeneID" id="5411792"/>
<dbReference type="KEGG" id="mbn:Mboo_0493"/>
<dbReference type="eggNOG" id="arCOG01988">
    <property type="taxonomic scope" value="Archaea"/>
</dbReference>
<dbReference type="HOGENOM" id="CLU_165896_0_0_2"/>
<dbReference type="OrthoDB" id="84643at2157"/>
<dbReference type="Proteomes" id="UP000002408">
    <property type="component" value="Chromosome"/>
</dbReference>
<dbReference type="GO" id="GO:0003746">
    <property type="term" value="F:translation elongation factor activity"/>
    <property type="evidence" value="ECO:0007669"/>
    <property type="project" value="UniProtKB-UniRule"/>
</dbReference>
<dbReference type="CDD" id="cd00292">
    <property type="entry name" value="EF1B"/>
    <property type="match status" value="1"/>
</dbReference>
<dbReference type="Gene3D" id="3.30.70.60">
    <property type="match status" value="1"/>
</dbReference>
<dbReference type="HAMAP" id="MF_00043">
    <property type="entry name" value="EF1_beta"/>
    <property type="match status" value="1"/>
</dbReference>
<dbReference type="InterPro" id="IPR036219">
    <property type="entry name" value="eEF-1beta-like_sf"/>
</dbReference>
<dbReference type="InterPro" id="IPR014038">
    <property type="entry name" value="EF1B_bsu/dsu_GNE"/>
</dbReference>
<dbReference type="InterPro" id="IPR014717">
    <property type="entry name" value="Transl_elong_EF1B/ribsomal_bS6"/>
</dbReference>
<dbReference type="InterPro" id="IPR004542">
    <property type="entry name" value="Transl_elong_EF1B_B_arc"/>
</dbReference>
<dbReference type="NCBIfam" id="TIGR00489">
    <property type="entry name" value="aEF-1_beta"/>
    <property type="match status" value="1"/>
</dbReference>
<dbReference type="NCBIfam" id="NF001670">
    <property type="entry name" value="PRK00435.1"/>
    <property type="match status" value="1"/>
</dbReference>
<dbReference type="PANTHER" id="PTHR39647">
    <property type="entry name" value="ELONGATION FACTOR 1-BETA"/>
    <property type="match status" value="1"/>
</dbReference>
<dbReference type="PANTHER" id="PTHR39647:SF1">
    <property type="entry name" value="ELONGATION FACTOR 1-BETA"/>
    <property type="match status" value="1"/>
</dbReference>
<dbReference type="Pfam" id="PF00736">
    <property type="entry name" value="EF1_GNE"/>
    <property type="match status" value="1"/>
</dbReference>
<dbReference type="PIRSF" id="PIRSF006521">
    <property type="entry name" value="Transl_elong_EF1B_B_arc"/>
    <property type="match status" value="1"/>
</dbReference>
<dbReference type="SMART" id="SM00888">
    <property type="entry name" value="EF1_GNE"/>
    <property type="match status" value="1"/>
</dbReference>
<dbReference type="SUPFAM" id="SSF54984">
    <property type="entry name" value="eEF-1beta-like"/>
    <property type="match status" value="1"/>
</dbReference>
<reference key="1">
    <citation type="journal article" date="2015" name="Microbiology">
        <title>Genome of Methanoregula boonei 6A8 reveals adaptations to oligotrophic peatland environments.</title>
        <authorList>
            <person name="Braeuer S."/>
            <person name="Cadillo-Quiroz H."/>
            <person name="Kyrpides N."/>
            <person name="Woyke T."/>
            <person name="Goodwin L."/>
            <person name="Detter C."/>
            <person name="Podell S."/>
            <person name="Yavitt J.B."/>
            <person name="Zinder S.H."/>
        </authorList>
    </citation>
    <scope>NUCLEOTIDE SEQUENCE [LARGE SCALE GENOMIC DNA]</scope>
    <source>
        <strain>DSM 21154 / JCM 14090 / 6A8</strain>
    </source>
</reference>
<evidence type="ECO:0000255" key="1">
    <source>
        <dbReference type="HAMAP-Rule" id="MF_00043"/>
    </source>
</evidence>
<accession>A7I5K0</accession>
<sequence length="85" mass="8961">MGSVVAILRVMPESPDIDLEKLKKALKDALPGIKDIQEEPIGFGLKALKLAAIVNDAGGETDALEGKLNAVPGVERAEIIEVTLN</sequence>
<gene>
    <name evidence="1" type="primary">ef1b</name>
    <name type="ordered locus">Mboo_0493</name>
</gene>
<organism>
    <name type="scientific">Methanoregula boonei (strain DSM 21154 / JCM 14090 / 6A8)</name>
    <dbReference type="NCBI Taxonomy" id="456442"/>
    <lineage>
        <taxon>Archaea</taxon>
        <taxon>Methanobacteriati</taxon>
        <taxon>Methanobacteriota</taxon>
        <taxon>Stenosarchaea group</taxon>
        <taxon>Methanomicrobia</taxon>
        <taxon>Methanomicrobiales</taxon>
        <taxon>Methanoregulaceae</taxon>
        <taxon>Methanoregula</taxon>
    </lineage>
</organism>
<keyword id="KW-0251">Elongation factor</keyword>
<keyword id="KW-0648">Protein biosynthesis</keyword>
<keyword id="KW-1185">Reference proteome</keyword>
<name>EF1B_METB6</name>
<proteinExistence type="inferred from homology"/>